<evidence type="ECO:0000250" key="1"/>
<evidence type="ECO:0000305" key="2"/>
<organism>
    <name type="scientific">Equisetum sylvaticum</name>
    <name type="common">Wood horsetail</name>
    <dbReference type="NCBI Taxonomy" id="231679"/>
    <lineage>
        <taxon>Eukaryota</taxon>
        <taxon>Viridiplantae</taxon>
        <taxon>Streptophyta</taxon>
        <taxon>Embryophyta</taxon>
        <taxon>Tracheophyta</taxon>
        <taxon>Polypodiopsida</taxon>
        <taxon>Equisetidae</taxon>
        <taxon>Equisetales</taxon>
        <taxon>Equisetaceae</taxon>
        <taxon>Equisetum</taxon>
    </lineage>
</organism>
<proteinExistence type="inferred from homology"/>
<feature type="chain" id="PRO_0000132582" description="Small ribosomal subunit protein uS4c">
    <location>
        <begin position="1"/>
        <end position="207"/>
    </location>
</feature>
<feature type="domain" description="S4 RNA-binding">
    <location>
        <begin position="92"/>
        <end position="156"/>
    </location>
</feature>
<geneLocation type="chloroplast"/>
<name>RR4_EQUSY</name>
<reference key="1">
    <citation type="journal article" date="2004" name="Syst. Bot.">
        <title>Phylogeny of horsetails (Equisetum) based on the chloroplast rps4 gene and adjacent noncoding sequences.</title>
        <authorList>
            <person name="Guillon J.-M."/>
        </authorList>
        <dbReference type="AGRICOLA" id="IND43653535"/>
    </citation>
    <scope>NUCLEOTIDE SEQUENCE [GENOMIC DNA]</scope>
</reference>
<sequence>MSRYRGPRLRIIRRLRNLPGLTNKLVESKKNQASGSDQSNQKKVSQYCIRLEAKQRLRFNYGLTERQLLNYVRIARCAKGSTGQILLQLLEMRLDNILFRLGVVPTIPSARQLINHRHILVNNRIVDIPSFHCKPKDIITIGAPKTYQSIITKRIEAFAKDQIPDHLTLSLSEPKKPKGFVNYLINRESIGLKINELLVVEYYSRKA</sequence>
<accession>Q6H9K4</accession>
<comment type="function">
    <text evidence="1">One of the primary rRNA binding proteins, it binds directly to 16S rRNA where it nucleates assembly of the body of the 30S subunit.</text>
</comment>
<comment type="function">
    <text evidence="1">With S5 and S12 plays an important role in translational accuracy.</text>
</comment>
<comment type="subunit">
    <text evidence="1">Part of the 30S ribosomal subunit. Contacts protein S5. The interaction surface between S4 and S5 is involved in control of translational fidelity (By similarity).</text>
</comment>
<comment type="subcellular location">
    <subcellularLocation>
        <location>Plastid</location>
        <location>Chloroplast</location>
    </subcellularLocation>
</comment>
<comment type="similarity">
    <text evidence="2">Belongs to the universal ribosomal protein uS4 family.</text>
</comment>
<protein>
    <recommendedName>
        <fullName evidence="2">Small ribosomal subunit protein uS4c</fullName>
    </recommendedName>
    <alternativeName>
        <fullName>30S ribosomal protein S4, chloroplastic</fullName>
    </alternativeName>
</protein>
<keyword id="KW-0150">Chloroplast</keyword>
<keyword id="KW-0934">Plastid</keyword>
<keyword id="KW-0687">Ribonucleoprotein</keyword>
<keyword id="KW-0689">Ribosomal protein</keyword>
<keyword id="KW-0694">RNA-binding</keyword>
<keyword id="KW-0699">rRNA-binding</keyword>
<dbReference type="EMBL" id="AJ583689">
    <property type="protein sequence ID" value="CAE47543.1"/>
    <property type="molecule type" value="Genomic_DNA"/>
</dbReference>
<dbReference type="SMR" id="Q6H9K4"/>
<dbReference type="GO" id="GO:0009507">
    <property type="term" value="C:chloroplast"/>
    <property type="evidence" value="ECO:0007669"/>
    <property type="project" value="UniProtKB-SubCell"/>
</dbReference>
<dbReference type="GO" id="GO:0015935">
    <property type="term" value="C:small ribosomal subunit"/>
    <property type="evidence" value="ECO:0007669"/>
    <property type="project" value="InterPro"/>
</dbReference>
<dbReference type="GO" id="GO:0019843">
    <property type="term" value="F:rRNA binding"/>
    <property type="evidence" value="ECO:0007669"/>
    <property type="project" value="UniProtKB-UniRule"/>
</dbReference>
<dbReference type="GO" id="GO:0003735">
    <property type="term" value="F:structural constituent of ribosome"/>
    <property type="evidence" value="ECO:0007669"/>
    <property type="project" value="InterPro"/>
</dbReference>
<dbReference type="GO" id="GO:0042274">
    <property type="term" value="P:ribosomal small subunit biogenesis"/>
    <property type="evidence" value="ECO:0007669"/>
    <property type="project" value="TreeGrafter"/>
</dbReference>
<dbReference type="GO" id="GO:0006412">
    <property type="term" value="P:translation"/>
    <property type="evidence" value="ECO:0007669"/>
    <property type="project" value="UniProtKB-UniRule"/>
</dbReference>
<dbReference type="CDD" id="cd00165">
    <property type="entry name" value="S4"/>
    <property type="match status" value="1"/>
</dbReference>
<dbReference type="FunFam" id="3.10.290.10:FF:000001">
    <property type="entry name" value="30S ribosomal protein S4"/>
    <property type="match status" value="1"/>
</dbReference>
<dbReference type="FunFam" id="1.10.1050.10:FF:000002">
    <property type="entry name" value="30S ribosomal protein S4, chloroplastic"/>
    <property type="match status" value="1"/>
</dbReference>
<dbReference type="Gene3D" id="1.10.1050.10">
    <property type="entry name" value="Ribosomal Protein S4 Delta 41, Chain A, domain 1"/>
    <property type="match status" value="1"/>
</dbReference>
<dbReference type="Gene3D" id="3.10.290.10">
    <property type="entry name" value="RNA-binding S4 domain"/>
    <property type="match status" value="1"/>
</dbReference>
<dbReference type="HAMAP" id="MF_01306_B">
    <property type="entry name" value="Ribosomal_uS4_B"/>
    <property type="match status" value="1"/>
</dbReference>
<dbReference type="InterPro" id="IPR022801">
    <property type="entry name" value="Ribosomal_uS4"/>
</dbReference>
<dbReference type="InterPro" id="IPR005709">
    <property type="entry name" value="Ribosomal_uS4_bac-type"/>
</dbReference>
<dbReference type="InterPro" id="IPR018079">
    <property type="entry name" value="Ribosomal_uS4_CS"/>
</dbReference>
<dbReference type="InterPro" id="IPR001912">
    <property type="entry name" value="Ribosomal_uS4_N"/>
</dbReference>
<dbReference type="InterPro" id="IPR002942">
    <property type="entry name" value="S4_RNA-bd"/>
</dbReference>
<dbReference type="InterPro" id="IPR036986">
    <property type="entry name" value="S4_RNA-bd_sf"/>
</dbReference>
<dbReference type="NCBIfam" id="NF003717">
    <property type="entry name" value="PRK05327.1"/>
    <property type="match status" value="1"/>
</dbReference>
<dbReference type="NCBIfam" id="TIGR01017">
    <property type="entry name" value="rpsD_bact"/>
    <property type="match status" value="1"/>
</dbReference>
<dbReference type="PANTHER" id="PTHR11831">
    <property type="entry name" value="30S 40S RIBOSOMAL PROTEIN"/>
    <property type="match status" value="1"/>
</dbReference>
<dbReference type="PANTHER" id="PTHR11831:SF4">
    <property type="entry name" value="SMALL RIBOSOMAL SUBUNIT PROTEIN US4M"/>
    <property type="match status" value="1"/>
</dbReference>
<dbReference type="Pfam" id="PF00163">
    <property type="entry name" value="Ribosomal_S4"/>
    <property type="match status" value="1"/>
</dbReference>
<dbReference type="Pfam" id="PF01479">
    <property type="entry name" value="S4"/>
    <property type="match status" value="1"/>
</dbReference>
<dbReference type="SMART" id="SM01390">
    <property type="entry name" value="Ribosomal_S4"/>
    <property type="match status" value="1"/>
</dbReference>
<dbReference type="SMART" id="SM00363">
    <property type="entry name" value="S4"/>
    <property type="match status" value="1"/>
</dbReference>
<dbReference type="SUPFAM" id="SSF55174">
    <property type="entry name" value="Alpha-L RNA-binding motif"/>
    <property type="match status" value="1"/>
</dbReference>
<dbReference type="PROSITE" id="PS00632">
    <property type="entry name" value="RIBOSOMAL_S4"/>
    <property type="match status" value="1"/>
</dbReference>
<dbReference type="PROSITE" id="PS50889">
    <property type="entry name" value="S4"/>
    <property type="match status" value="1"/>
</dbReference>
<gene>
    <name type="primary">rps4</name>
</gene>